<accession>B5Z0E7</accession>
<dbReference type="EMBL" id="CP001164">
    <property type="protein sequence ID" value="ACI38188.1"/>
    <property type="molecule type" value="Genomic_DNA"/>
</dbReference>
<dbReference type="RefSeq" id="WP_000246882.1">
    <property type="nucleotide sequence ID" value="NC_011353.1"/>
</dbReference>
<dbReference type="SMR" id="B5Z0E7"/>
<dbReference type="GeneID" id="89519558"/>
<dbReference type="KEGG" id="ecf:ECH74115_0179"/>
<dbReference type="HOGENOM" id="CLU_040318_1_2_6"/>
<dbReference type="GO" id="GO:0022627">
    <property type="term" value="C:cytosolic small ribosomal subunit"/>
    <property type="evidence" value="ECO:0007669"/>
    <property type="project" value="TreeGrafter"/>
</dbReference>
<dbReference type="GO" id="GO:0003735">
    <property type="term" value="F:structural constituent of ribosome"/>
    <property type="evidence" value="ECO:0007669"/>
    <property type="project" value="InterPro"/>
</dbReference>
<dbReference type="GO" id="GO:0006412">
    <property type="term" value="P:translation"/>
    <property type="evidence" value="ECO:0007669"/>
    <property type="project" value="UniProtKB-UniRule"/>
</dbReference>
<dbReference type="CDD" id="cd01425">
    <property type="entry name" value="RPS2"/>
    <property type="match status" value="1"/>
</dbReference>
<dbReference type="FunFam" id="1.10.287.610:FF:000001">
    <property type="entry name" value="30S ribosomal protein S2"/>
    <property type="match status" value="1"/>
</dbReference>
<dbReference type="Gene3D" id="3.40.50.10490">
    <property type="entry name" value="Glucose-6-phosphate isomerase like protein, domain 1"/>
    <property type="match status" value="1"/>
</dbReference>
<dbReference type="Gene3D" id="1.10.287.610">
    <property type="entry name" value="Helix hairpin bin"/>
    <property type="match status" value="1"/>
</dbReference>
<dbReference type="HAMAP" id="MF_00291_B">
    <property type="entry name" value="Ribosomal_uS2_B"/>
    <property type="match status" value="1"/>
</dbReference>
<dbReference type="InterPro" id="IPR001865">
    <property type="entry name" value="Ribosomal_uS2"/>
</dbReference>
<dbReference type="InterPro" id="IPR005706">
    <property type="entry name" value="Ribosomal_uS2_bac/mit/plastid"/>
</dbReference>
<dbReference type="InterPro" id="IPR018130">
    <property type="entry name" value="Ribosomal_uS2_CS"/>
</dbReference>
<dbReference type="InterPro" id="IPR023591">
    <property type="entry name" value="Ribosomal_uS2_flav_dom_sf"/>
</dbReference>
<dbReference type="NCBIfam" id="TIGR01011">
    <property type="entry name" value="rpsB_bact"/>
    <property type="match status" value="1"/>
</dbReference>
<dbReference type="PANTHER" id="PTHR12534">
    <property type="entry name" value="30S RIBOSOMAL PROTEIN S2 PROKARYOTIC AND ORGANELLAR"/>
    <property type="match status" value="1"/>
</dbReference>
<dbReference type="PANTHER" id="PTHR12534:SF0">
    <property type="entry name" value="SMALL RIBOSOMAL SUBUNIT PROTEIN US2M"/>
    <property type="match status" value="1"/>
</dbReference>
<dbReference type="Pfam" id="PF00318">
    <property type="entry name" value="Ribosomal_S2"/>
    <property type="match status" value="1"/>
</dbReference>
<dbReference type="PRINTS" id="PR00395">
    <property type="entry name" value="RIBOSOMALS2"/>
</dbReference>
<dbReference type="SUPFAM" id="SSF52313">
    <property type="entry name" value="Ribosomal protein S2"/>
    <property type="match status" value="1"/>
</dbReference>
<dbReference type="PROSITE" id="PS00962">
    <property type="entry name" value="RIBOSOMAL_S2_1"/>
    <property type="match status" value="1"/>
</dbReference>
<dbReference type="PROSITE" id="PS00963">
    <property type="entry name" value="RIBOSOMAL_S2_2"/>
    <property type="match status" value="1"/>
</dbReference>
<organism>
    <name type="scientific">Escherichia coli O157:H7 (strain EC4115 / EHEC)</name>
    <dbReference type="NCBI Taxonomy" id="444450"/>
    <lineage>
        <taxon>Bacteria</taxon>
        <taxon>Pseudomonadati</taxon>
        <taxon>Pseudomonadota</taxon>
        <taxon>Gammaproteobacteria</taxon>
        <taxon>Enterobacterales</taxon>
        <taxon>Enterobacteriaceae</taxon>
        <taxon>Escherichia</taxon>
    </lineage>
</organism>
<evidence type="ECO:0000255" key="1">
    <source>
        <dbReference type="HAMAP-Rule" id="MF_00291"/>
    </source>
</evidence>
<evidence type="ECO:0000305" key="2"/>
<reference key="1">
    <citation type="journal article" date="2011" name="Proc. Natl. Acad. Sci. U.S.A.">
        <title>Genomic anatomy of Escherichia coli O157:H7 outbreaks.</title>
        <authorList>
            <person name="Eppinger M."/>
            <person name="Mammel M.K."/>
            <person name="Leclerc J.E."/>
            <person name="Ravel J."/>
            <person name="Cebula T.A."/>
        </authorList>
    </citation>
    <scope>NUCLEOTIDE SEQUENCE [LARGE SCALE GENOMIC DNA]</scope>
    <source>
        <strain>EC4115 / EHEC</strain>
    </source>
</reference>
<keyword id="KW-0687">Ribonucleoprotein</keyword>
<keyword id="KW-0689">Ribosomal protein</keyword>
<proteinExistence type="inferred from homology"/>
<comment type="similarity">
    <text evidence="1">Belongs to the universal ribosomal protein uS2 family.</text>
</comment>
<name>RS2_ECO5E</name>
<sequence length="241" mass="26744">MATVSMRDMLKAGVHFGHQTRYWNPKMKPFIFGARNKVHIINLEKTVPMFNEALAELNKIASRKGKILFVGTKRAASEAVKDAALSCDQFFVNHRWLGGMLTNWKTVRQSIKRLKDLETQSQDGTFDKLTKKEALMRTRELEKLENSLGGIKDMGGLPDALFVIDADHEHIAIKEANNLGIPVFAIVDTNSDPDGVDFVIPGNDDAIRAVTLYLGAVAATVREGRSQDLASQAEESFVEAE</sequence>
<protein>
    <recommendedName>
        <fullName evidence="1">Small ribosomal subunit protein uS2</fullName>
    </recommendedName>
    <alternativeName>
        <fullName evidence="2">30S ribosomal protein S2</fullName>
    </alternativeName>
</protein>
<feature type="chain" id="PRO_1000115016" description="Small ribosomal subunit protein uS2">
    <location>
        <begin position="1"/>
        <end position="241"/>
    </location>
</feature>
<gene>
    <name evidence="1" type="primary">rpsB</name>
    <name type="ordered locus">ECH74115_0179</name>
</gene>